<keyword id="KW-0002">3D-structure</keyword>
<keyword id="KW-0007">Acetylation</keyword>
<keyword id="KW-0430">Lectin</keyword>
<keyword id="KW-1185">Reference proteome</keyword>
<keyword id="KW-0677">Repeat</keyword>
<comment type="function">
    <text evidence="5">Sugar-binding protein showing significant affinity for (Glc alpha(1-4)Glc)(3) maltohexaose, (Glc alpha(1-6)Glc)(3) isomaltohexaose, Gal alpha(1-4)Gal beta(1-4)Glc, GalNAc alpha(1-3)(Fuc alpha(1-2)) and Gal beta(1-3)(Fuc alpha(1-4))GlcNAc beta(1-3)Gal beta(1-4)Glc.</text>
</comment>
<comment type="subunit">
    <text evidence="4">Component of the PYK10 complex, at least composed of PYK10/BGLU23, BGLU21, BGLU22, JAL22, JAL23, PBP1/JAL30, PBP2/JAL31, JAL32, JAL33, JAL34, JAL35, GLL22 and GLL23.</text>
</comment>
<comment type="similarity">
    <text evidence="2 6">Belongs to the jacalin lectin family.</text>
</comment>
<dbReference type="EMBL" id="AP000373">
    <property type="protein sequence ID" value="BAB01144.1"/>
    <property type="molecule type" value="Genomic_DNA"/>
</dbReference>
<dbReference type="EMBL" id="AC001645">
    <property type="protein sequence ID" value="AAB63632.1"/>
    <property type="molecule type" value="Genomic_DNA"/>
</dbReference>
<dbReference type="EMBL" id="CP002686">
    <property type="protein sequence ID" value="AEE75817.1"/>
    <property type="molecule type" value="Genomic_DNA"/>
</dbReference>
<dbReference type="EMBL" id="CP002686">
    <property type="protein sequence ID" value="AEE75818.1"/>
    <property type="molecule type" value="Genomic_DNA"/>
</dbReference>
<dbReference type="EMBL" id="CP002686">
    <property type="protein sequence ID" value="AEE75819.1"/>
    <property type="molecule type" value="Genomic_DNA"/>
</dbReference>
<dbReference type="EMBL" id="AF380655">
    <property type="protein sequence ID" value="AAK55736.1"/>
    <property type="molecule type" value="mRNA"/>
</dbReference>
<dbReference type="EMBL" id="AY133546">
    <property type="protein sequence ID" value="AAM91376.1"/>
    <property type="molecule type" value="mRNA"/>
</dbReference>
<dbReference type="EMBL" id="AK317360">
    <property type="protein sequence ID" value="BAH20032.1"/>
    <property type="molecule type" value="mRNA"/>
</dbReference>
<dbReference type="RefSeq" id="NP_001030711.1">
    <property type="nucleotide sequence ID" value="NM_001035634.3"/>
</dbReference>
<dbReference type="RefSeq" id="NP_188266.1">
    <property type="nucleotide sequence ID" value="NM_112516.5"/>
</dbReference>
<dbReference type="RefSeq" id="NP_850596.1">
    <property type="nucleotide sequence ID" value="NM_180265.4"/>
</dbReference>
<dbReference type="PDB" id="2JZ4">
    <property type="method" value="NMR"/>
    <property type="chains" value="A=2-300"/>
</dbReference>
<dbReference type="PDBsum" id="2JZ4"/>
<dbReference type="BMRB" id="O04311"/>
<dbReference type="SMR" id="O04311"/>
<dbReference type="BioGRID" id="6227">
    <property type="interactions" value="2"/>
</dbReference>
<dbReference type="FunCoup" id="O04311">
    <property type="interactions" value="43"/>
</dbReference>
<dbReference type="IntAct" id="O04311">
    <property type="interactions" value="1"/>
</dbReference>
<dbReference type="STRING" id="3702.O04311"/>
<dbReference type="GlyGen" id="O04311">
    <property type="glycosylation" value="1 site"/>
</dbReference>
<dbReference type="PaxDb" id="3702-AT3G16450.2"/>
<dbReference type="ProteomicsDB" id="250663"/>
<dbReference type="EnsemblPlants" id="AT3G16450.1">
    <property type="protein sequence ID" value="AT3G16450.1"/>
    <property type="gene ID" value="AT3G16450"/>
</dbReference>
<dbReference type="EnsemblPlants" id="AT3G16450.2">
    <property type="protein sequence ID" value="AT3G16450.2"/>
    <property type="gene ID" value="AT3G16450"/>
</dbReference>
<dbReference type="EnsemblPlants" id="AT3G16450.3">
    <property type="protein sequence ID" value="AT3G16450.3"/>
    <property type="gene ID" value="AT3G16450"/>
</dbReference>
<dbReference type="GeneID" id="820893"/>
<dbReference type="Gramene" id="AT3G16450.1">
    <property type="protein sequence ID" value="AT3G16450.1"/>
    <property type="gene ID" value="AT3G16450"/>
</dbReference>
<dbReference type="Gramene" id="AT3G16450.2">
    <property type="protein sequence ID" value="AT3G16450.2"/>
    <property type="gene ID" value="AT3G16450"/>
</dbReference>
<dbReference type="Gramene" id="AT3G16450.3">
    <property type="protein sequence ID" value="AT3G16450.3"/>
    <property type="gene ID" value="AT3G16450"/>
</dbReference>
<dbReference type="KEGG" id="ath:AT3G16450"/>
<dbReference type="Araport" id="AT3G16450"/>
<dbReference type="TAIR" id="AT3G16450">
    <property type="gene designation" value="JAL33"/>
</dbReference>
<dbReference type="HOGENOM" id="CLU_019384_1_0_1"/>
<dbReference type="InParanoid" id="O04311"/>
<dbReference type="OMA" id="VYAKDSQ"/>
<dbReference type="PhylomeDB" id="O04311"/>
<dbReference type="EvolutionaryTrace" id="O04311"/>
<dbReference type="PRO" id="PR:O04311"/>
<dbReference type="Proteomes" id="UP000006548">
    <property type="component" value="Chromosome 3"/>
</dbReference>
<dbReference type="ExpressionAtlas" id="O04311">
    <property type="expression patterns" value="baseline and differential"/>
</dbReference>
<dbReference type="GO" id="GO:0005634">
    <property type="term" value="C:nucleus"/>
    <property type="evidence" value="ECO:0007005"/>
    <property type="project" value="TAIR"/>
</dbReference>
<dbReference type="GO" id="GO:0009506">
    <property type="term" value="C:plasmodesma"/>
    <property type="evidence" value="ECO:0007005"/>
    <property type="project" value="TAIR"/>
</dbReference>
<dbReference type="GO" id="GO:0030246">
    <property type="term" value="F:carbohydrate binding"/>
    <property type="evidence" value="ECO:0007669"/>
    <property type="project" value="UniProtKB-KW"/>
</dbReference>
<dbReference type="GO" id="GO:0010043">
    <property type="term" value="P:response to zinc ion"/>
    <property type="evidence" value="ECO:0000270"/>
    <property type="project" value="TAIR"/>
</dbReference>
<dbReference type="CDD" id="cd09612">
    <property type="entry name" value="Jacalin"/>
    <property type="match status" value="2"/>
</dbReference>
<dbReference type="FunFam" id="2.100.10.30:FF:000001">
    <property type="entry name" value="Jacalin-related lectin 33"/>
    <property type="match status" value="2"/>
</dbReference>
<dbReference type="Gene3D" id="2.100.10.30">
    <property type="entry name" value="Jacalin-like lectin domain"/>
    <property type="match status" value="2"/>
</dbReference>
<dbReference type="InterPro" id="IPR001229">
    <property type="entry name" value="Jacalin-like_lectin_dom"/>
</dbReference>
<dbReference type="InterPro" id="IPR033734">
    <property type="entry name" value="Jacalin-like_lectin_dom_plant"/>
</dbReference>
<dbReference type="InterPro" id="IPR036404">
    <property type="entry name" value="Jacalin-like_lectin_dom_sf"/>
</dbReference>
<dbReference type="PANTHER" id="PTHR47293">
    <property type="entry name" value="JACALIN-RELATED LECTIN 3"/>
    <property type="match status" value="1"/>
</dbReference>
<dbReference type="PANTHER" id="PTHR47293:SF12">
    <property type="entry name" value="JACALIN-RELATED LECTIN 32-RELATED"/>
    <property type="match status" value="1"/>
</dbReference>
<dbReference type="Pfam" id="PF01419">
    <property type="entry name" value="Jacalin"/>
    <property type="match status" value="2"/>
</dbReference>
<dbReference type="SMART" id="SM00915">
    <property type="entry name" value="Jacalin"/>
    <property type="match status" value="2"/>
</dbReference>
<dbReference type="SUPFAM" id="SSF51101">
    <property type="entry name" value="Mannose-binding lectins"/>
    <property type="match status" value="2"/>
</dbReference>
<dbReference type="PROSITE" id="PS51752">
    <property type="entry name" value="JACALIN_LECTIN"/>
    <property type="match status" value="2"/>
</dbReference>
<name>JAL33_ARATH</name>
<protein>
    <recommendedName>
        <fullName>Jacalin-related lectin 33</fullName>
    </recommendedName>
</protein>
<gene>
    <name type="primary">JAL33</name>
    <name type="ordered locus">At3g16450</name>
    <name type="ORF">MDC8.8</name>
    <name type="ORF">T02O04.5</name>
</gene>
<feature type="initiator methionine" description="Removed" evidence="1">
    <location>
        <position position="1"/>
    </location>
</feature>
<feature type="chain" id="PRO_0000430392" description="Jacalin-related lectin 33">
    <location>
        <begin position="2"/>
        <end position="300"/>
    </location>
</feature>
<feature type="domain" description="Jacalin-type lectin 1" evidence="2">
    <location>
        <begin position="2"/>
        <end position="146"/>
    </location>
</feature>
<feature type="domain" description="Jacalin-type lectin 2" evidence="2">
    <location>
        <begin position="154"/>
        <end position="297"/>
    </location>
</feature>
<feature type="region of interest" description="Disordered" evidence="3">
    <location>
        <begin position="1"/>
        <end position="20"/>
    </location>
</feature>
<feature type="modified residue" description="N-acetylalanine" evidence="1">
    <location>
        <position position="2"/>
    </location>
</feature>
<feature type="strand" evidence="7">
    <location>
        <begin position="26"/>
        <end position="31"/>
    </location>
</feature>
<feature type="strand" evidence="7">
    <location>
        <begin position="33"/>
        <end position="41"/>
    </location>
</feature>
<feature type="strand" evidence="7">
    <location>
        <begin position="54"/>
        <end position="56"/>
    </location>
</feature>
<feature type="strand" evidence="7">
    <location>
        <begin position="74"/>
        <end position="82"/>
    </location>
</feature>
<feature type="strand" evidence="7">
    <location>
        <begin position="91"/>
        <end position="99"/>
    </location>
</feature>
<feature type="strand" evidence="7">
    <location>
        <begin position="113"/>
        <end position="119"/>
    </location>
</feature>
<feature type="strand" evidence="7">
    <location>
        <begin position="133"/>
        <end position="137"/>
    </location>
</feature>
<feature type="strand" evidence="7">
    <location>
        <begin position="177"/>
        <end position="183"/>
    </location>
</feature>
<feature type="strand" evidence="7">
    <location>
        <begin position="185"/>
        <end position="195"/>
    </location>
</feature>
<feature type="strand" evidence="7">
    <location>
        <begin position="216"/>
        <end position="218"/>
    </location>
</feature>
<feature type="turn" evidence="7">
    <location>
        <begin position="222"/>
        <end position="224"/>
    </location>
</feature>
<feature type="strand" evidence="7">
    <location>
        <begin position="230"/>
        <end position="236"/>
    </location>
</feature>
<feature type="strand" evidence="7">
    <location>
        <begin position="238"/>
        <end position="241"/>
    </location>
</feature>
<feature type="strand" evidence="7">
    <location>
        <begin position="243"/>
        <end position="250"/>
    </location>
</feature>
<feature type="strand" evidence="7">
    <location>
        <begin position="253"/>
        <end position="255"/>
    </location>
</feature>
<feature type="strand" evidence="7">
    <location>
        <begin position="265"/>
        <end position="270"/>
    </location>
</feature>
<feature type="strand" evidence="7">
    <location>
        <begin position="273"/>
        <end position="276"/>
    </location>
</feature>
<feature type="strand" evidence="7">
    <location>
        <begin position="280"/>
        <end position="293"/>
    </location>
</feature>
<feature type="strand" evidence="7">
    <location>
        <begin position="295"/>
        <end position="297"/>
    </location>
</feature>
<proteinExistence type="evidence at protein level"/>
<sequence length="300" mass="32023">MAQKVEAGGGAGGASWDDGVHDGVRKVHVGQGQDGVSSINVVYAKDSQDVEGGEHGKKTLLGFETFEVDADDYIVAVQVTYDNVFGQDSDIITSITFNTFKGKTSPPYGLETQKKFVLKDKNGGKLVGFHGRAGEALYALGAYFATTTTPVTPAKKLSAIGGDEGTAWDDGAYDGVKKVYVGQGQDGISAVKFEYNKGAENIVGGEHGKPTLLGFEEFEIDYPSEYITAVEGTYDKIFGSDGLIITMLRFKTNKQTSAPFGLEAGTAFELKEEGHKIVGFHGKASELLHQFGVHVMPLTN</sequence>
<organism>
    <name type="scientific">Arabidopsis thaliana</name>
    <name type="common">Mouse-ear cress</name>
    <dbReference type="NCBI Taxonomy" id="3702"/>
    <lineage>
        <taxon>Eukaryota</taxon>
        <taxon>Viridiplantae</taxon>
        <taxon>Streptophyta</taxon>
        <taxon>Embryophyta</taxon>
        <taxon>Tracheophyta</taxon>
        <taxon>Spermatophyta</taxon>
        <taxon>Magnoliopsida</taxon>
        <taxon>eudicotyledons</taxon>
        <taxon>Gunneridae</taxon>
        <taxon>Pentapetalae</taxon>
        <taxon>rosids</taxon>
        <taxon>malvids</taxon>
        <taxon>Brassicales</taxon>
        <taxon>Brassicaceae</taxon>
        <taxon>Camelineae</taxon>
        <taxon>Arabidopsis</taxon>
    </lineage>
</organism>
<accession>O04311</accession>
<reference key="1">
    <citation type="journal article" date="2000" name="DNA Res.">
        <title>Structural analysis of Arabidopsis thaliana chromosome 3. II. Sequence features of the 4,251,695 bp regions covered by 90 P1, TAC and BAC clones.</title>
        <authorList>
            <person name="Kaneko T."/>
            <person name="Katoh T."/>
            <person name="Sato S."/>
            <person name="Nakamura Y."/>
            <person name="Asamizu E."/>
            <person name="Tabata S."/>
        </authorList>
    </citation>
    <scope>NUCLEOTIDE SEQUENCE [LARGE SCALE GENOMIC DNA]</scope>
    <source>
        <strain>cv. Columbia</strain>
    </source>
</reference>
<reference key="2">
    <citation type="journal article" date="2000" name="Nature">
        <title>Sequence and analysis of chromosome 3 of the plant Arabidopsis thaliana.</title>
        <authorList>
            <person name="Salanoubat M."/>
            <person name="Lemcke K."/>
            <person name="Rieger M."/>
            <person name="Ansorge W."/>
            <person name="Unseld M."/>
            <person name="Fartmann B."/>
            <person name="Valle G."/>
            <person name="Bloecker H."/>
            <person name="Perez-Alonso M."/>
            <person name="Obermaier B."/>
            <person name="Delseny M."/>
            <person name="Boutry M."/>
            <person name="Grivell L.A."/>
            <person name="Mache R."/>
            <person name="Puigdomenech P."/>
            <person name="De Simone V."/>
            <person name="Choisne N."/>
            <person name="Artiguenave F."/>
            <person name="Robert C."/>
            <person name="Brottier P."/>
            <person name="Wincker P."/>
            <person name="Cattolico L."/>
            <person name="Weissenbach J."/>
            <person name="Saurin W."/>
            <person name="Quetier F."/>
            <person name="Schaefer M."/>
            <person name="Mueller-Auer S."/>
            <person name="Gabel C."/>
            <person name="Fuchs M."/>
            <person name="Benes V."/>
            <person name="Wurmbach E."/>
            <person name="Drzonek H."/>
            <person name="Erfle H."/>
            <person name="Jordan N."/>
            <person name="Bangert S."/>
            <person name="Wiedelmann R."/>
            <person name="Kranz H."/>
            <person name="Voss H."/>
            <person name="Holland R."/>
            <person name="Brandt P."/>
            <person name="Nyakatura G."/>
            <person name="Vezzi A."/>
            <person name="D'Angelo M."/>
            <person name="Pallavicini A."/>
            <person name="Toppo S."/>
            <person name="Simionati B."/>
            <person name="Conrad A."/>
            <person name="Hornischer K."/>
            <person name="Kauer G."/>
            <person name="Loehnert T.-H."/>
            <person name="Nordsiek G."/>
            <person name="Reichelt J."/>
            <person name="Scharfe M."/>
            <person name="Schoen O."/>
            <person name="Bargues M."/>
            <person name="Terol J."/>
            <person name="Climent J."/>
            <person name="Navarro P."/>
            <person name="Collado C."/>
            <person name="Perez-Perez A."/>
            <person name="Ottenwaelder B."/>
            <person name="Duchemin D."/>
            <person name="Cooke R."/>
            <person name="Laudie M."/>
            <person name="Berger-Llauro C."/>
            <person name="Purnelle B."/>
            <person name="Masuy D."/>
            <person name="de Haan M."/>
            <person name="Maarse A.C."/>
            <person name="Alcaraz J.-P."/>
            <person name="Cottet A."/>
            <person name="Casacuberta E."/>
            <person name="Monfort A."/>
            <person name="Argiriou A."/>
            <person name="Flores M."/>
            <person name="Liguori R."/>
            <person name="Vitale D."/>
            <person name="Mannhaupt G."/>
            <person name="Haase D."/>
            <person name="Schoof H."/>
            <person name="Rudd S."/>
            <person name="Zaccaria P."/>
            <person name="Mewes H.-W."/>
            <person name="Mayer K.F.X."/>
            <person name="Kaul S."/>
            <person name="Town C.D."/>
            <person name="Koo H.L."/>
            <person name="Tallon L.J."/>
            <person name="Jenkins J."/>
            <person name="Rooney T."/>
            <person name="Rizzo M."/>
            <person name="Walts A."/>
            <person name="Utterback T."/>
            <person name="Fujii C.Y."/>
            <person name="Shea T.P."/>
            <person name="Creasy T.H."/>
            <person name="Haas B."/>
            <person name="Maiti R."/>
            <person name="Wu D."/>
            <person name="Peterson J."/>
            <person name="Van Aken S."/>
            <person name="Pai G."/>
            <person name="Militscher J."/>
            <person name="Sellers P."/>
            <person name="Gill J.E."/>
            <person name="Feldblyum T.V."/>
            <person name="Preuss D."/>
            <person name="Lin X."/>
            <person name="Nierman W.C."/>
            <person name="Salzberg S.L."/>
            <person name="White O."/>
            <person name="Venter J.C."/>
            <person name="Fraser C.M."/>
            <person name="Kaneko T."/>
            <person name="Nakamura Y."/>
            <person name="Sato S."/>
            <person name="Kato T."/>
            <person name="Asamizu E."/>
            <person name="Sasamoto S."/>
            <person name="Kimura T."/>
            <person name="Idesawa K."/>
            <person name="Kawashima K."/>
            <person name="Kishida Y."/>
            <person name="Kiyokawa C."/>
            <person name="Kohara M."/>
            <person name="Matsumoto M."/>
            <person name="Matsuno A."/>
            <person name="Muraki A."/>
            <person name="Nakayama S."/>
            <person name="Nakazaki N."/>
            <person name="Shinpo S."/>
            <person name="Takeuchi C."/>
            <person name="Wada T."/>
            <person name="Watanabe A."/>
            <person name="Yamada M."/>
            <person name="Yasuda M."/>
            <person name="Tabata S."/>
        </authorList>
    </citation>
    <scope>NUCLEOTIDE SEQUENCE [LARGE SCALE GENOMIC DNA]</scope>
    <source>
        <strain>cv. Columbia</strain>
    </source>
</reference>
<reference key="3">
    <citation type="journal article" date="2017" name="Plant J.">
        <title>Araport11: a complete reannotation of the Arabidopsis thaliana reference genome.</title>
        <authorList>
            <person name="Cheng C.Y."/>
            <person name="Krishnakumar V."/>
            <person name="Chan A.P."/>
            <person name="Thibaud-Nissen F."/>
            <person name="Schobel S."/>
            <person name="Town C.D."/>
        </authorList>
    </citation>
    <scope>GENOME REANNOTATION</scope>
    <source>
        <strain>cv. Columbia</strain>
    </source>
</reference>
<reference key="4">
    <citation type="journal article" date="2003" name="Science">
        <title>Empirical analysis of transcriptional activity in the Arabidopsis genome.</title>
        <authorList>
            <person name="Yamada K."/>
            <person name="Lim J."/>
            <person name="Dale J.M."/>
            <person name="Chen H."/>
            <person name="Shinn P."/>
            <person name="Palm C.J."/>
            <person name="Southwick A.M."/>
            <person name="Wu H.C."/>
            <person name="Kim C.J."/>
            <person name="Nguyen M."/>
            <person name="Pham P.K."/>
            <person name="Cheuk R.F."/>
            <person name="Karlin-Newmann G."/>
            <person name="Liu S.X."/>
            <person name="Lam B."/>
            <person name="Sakano H."/>
            <person name="Wu T."/>
            <person name="Yu G."/>
            <person name="Miranda M."/>
            <person name="Quach H.L."/>
            <person name="Tripp M."/>
            <person name="Chang C.H."/>
            <person name="Lee J.M."/>
            <person name="Toriumi M.J."/>
            <person name="Chan M.M."/>
            <person name="Tang C.C."/>
            <person name="Onodera C.S."/>
            <person name="Deng J.M."/>
            <person name="Akiyama K."/>
            <person name="Ansari Y."/>
            <person name="Arakawa T."/>
            <person name="Banh J."/>
            <person name="Banno F."/>
            <person name="Bowser L."/>
            <person name="Brooks S.Y."/>
            <person name="Carninci P."/>
            <person name="Chao Q."/>
            <person name="Choy N."/>
            <person name="Enju A."/>
            <person name="Goldsmith A.D."/>
            <person name="Gurjal M."/>
            <person name="Hansen N.F."/>
            <person name="Hayashizaki Y."/>
            <person name="Johnson-Hopson C."/>
            <person name="Hsuan V.W."/>
            <person name="Iida K."/>
            <person name="Karnes M."/>
            <person name="Khan S."/>
            <person name="Koesema E."/>
            <person name="Ishida J."/>
            <person name="Jiang P.X."/>
            <person name="Jones T."/>
            <person name="Kawai J."/>
            <person name="Kamiya A."/>
            <person name="Meyers C."/>
            <person name="Nakajima M."/>
            <person name="Narusaka M."/>
            <person name="Seki M."/>
            <person name="Sakurai T."/>
            <person name="Satou M."/>
            <person name="Tamse R."/>
            <person name="Vaysberg M."/>
            <person name="Wallender E.K."/>
            <person name="Wong C."/>
            <person name="Yamamura Y."/>
            <person name="Yuan S."/>
            <person name="Shinozaki K."/>
            <person name="Davis R.W."/>
            <person name="Theologis A."/>
            <person name="Ecker J.R."/>
        </authorList>
    </citation>
    <scope>NUCLEOTIDE SEQUENCE [LARGE SCALE MRNA]</scope>
    <source>
        <strain>cv. Columbia</strain>
    </source>
</reference>
<reference key="5">
    <citation type="journal article" date="2009" name="DNA Res.">
        <title>Analysis of multiple occurrences of alternative splicing events in Arabidopsis thaliana using novel sequenced full-length cDNAs.</title>
        <authorList>
            <person name="Iida K."/>
            <person name="Fukami-Kobayashi K."/>
            <person name="Toyoda A."/>
            <person name="Sakaki Y."/>
            <person name="Kobayashi M."/>
            <person name="Seki M."/>
            <person name="Shinozaki K."/>
        </authorList>
    </citation>
    <scope>NUCLEOTIDE SEQUENCE [LARGE SCALE MRNA]</scope>
    <source>
        <strain>cv. Columbia</strain>
        <tissue>Root</tissue>
    </source>
</reference>
<reference key="6">
    <citation type="journal article" date="2008" name="Plant Cell Physiol.">
        <title>Antagonistic jacalin-related lectins regulate the size of ER body-type beta-glucosidase complexes in Arabidopsis thaliana.</title>
        <authorList>
            <person name="Nagano A.J."/>
            <person name="Fukao Y."/>
            <person name="Fujiwara M."/>
            <person name="Nishimura M."/>
            <person name="Hara-Nishimura I."/>
        </authorList>
    </citation>
    <scope>IDENTIFICATION IN THE PYK10 COMPLEX</scope>
    <scope>GENE FAMILY</scope>
    <scope>NOMENCLATURE</scope>
</reference>
<reference key="7">
    <citation type="journal article" date="2008" name="FEBS J.">
        <title>Structure of the putative 32 kDa myrosinase-binding protein from Arabidopsis (At3g16450.1) determined by SAIL-NMR.</title>
        <authorList>
            <person name="Takeda M."/>
            <person name="Sugimori N."/>
            <person name="Torizawa T."/>
            <person name="Terauchi T."/>
            <person name="Ono A.M."/>
            <person name="Yagi H."/>
            <person name="Yamaguchi Y."/>
            <person name="Kato K."/>
            <person name="Ikeya T."/>
            <person name="Jee J."/>
            <person name="Guntert P."/>
            <person name="Aceti D.J."/>
            <person name="Markley J.L."/>
            <person name="Kainosho M."/>
        </authorList>
    </citation>
    <scope>STRUCTURE BY NMR OF 2-300</scope>
    <scope>FUNCTION</scope>
</reference>
<evidence type="ECO:0000250" key="1">
    <source>
        <dbReference type="UniProtKB" id="Q9FGC5"/>
    </source>
</evidence>
<evidence type="ECO:0000255" key="2">
    <source>
        <dbReference type="PROSITE-ProRule" id="PRU01088"/>
    </source>
</evidence>
<evidence type="ECO:0000256" key="3">
    <source>
        <dbReference type="SAM" id="MobiDB-lite"/>
    </source>
</evidence>
<evidence type="ECO:0000269" key="4">
    <source>
    </source>
</evidence>
<evidence type="ECO:0000269" key="5">
    <source>
    </source>
</evidence>
<evidence type="ECO:0000305" key="6"/>
<evidence type="ECO:0007829" key="7">
    <source>
        <dbReference type="PDB" id="2JZ4"/>
    </source>
</evidence>